<feature type="chain" id="PRO_0000314287" description="Rho guanine nucleotide exchange factor 3">
    <location>
        <begin position="1"/>
        <end position="526"/>
    </location>
</feature>
<feature type="domain" description="DH" evidence="4">
    <location>
        <begin position="122"/>
        <end position="304"/>
    </location>
</feature>
<feature type="domain" description="PH" evidence="5">
    <location>
        <begin position="291"/>
        <end position="449"/>
    </location>
</feature>
<feature type="region of interest" description="Disordered" evidence="6">
    <location>
        <begin position="20"/>
        <end position="40"/>
    </location>
</feature>
<feature type="region of interest" description="Disordered" evidence="6">
    <location>
        <begin position="464"/>
        <end position="526"/>
    </location>
</feature>
<feature type="compositionally biased region" description="Polar residues" evidence="6">
    <location>
        <begin position="466"/>
        <end position="475"/>
    </location>
</feature>
<feature type="modified residue" description="Phosphoserine" evidence="3">
    <location>
        <position position="47"/>
    </location>
</feature>
<feature type="modified residue" description="Phosphoserine" evidence="2">
    <location>
        <position position="70"/>
    </location>
</feature>
<gene>
    <name type="primary">ARHGEF3</name>
</gene>
<protein>
    <recommendedName>
        <fullName>Rho guanine nucleotide exchange factor 3</fullName>
    </recommendedName>
</protein>
<accession>Q5R6F2</accession>
<name>ARHG3_PONAB</name>
<dbReference type="EMBL" id="CR860538">
    <property type="protein sequence ID" value="CAH92664.1"/>
    <property type="molecule type" value="mRNA"/>
</dbReference>
<dbReference type="SMR" id="Q5R6F2"/>
<dbReference type="STRING" id="9601.ENSPPYP00000015414"/>
<dbReference type="eggNOG" id="KOG4305">
    <property type="taxonomic scope" value="Eukaryota"/>
</dbReference>
<dbReference type="InParanoid" id="Q5R6F2"/>
<dbReference type="Proteomes" id="UP000001595">
    <property type="component" value="Unplaced"/>
</dbReference>
<dbReference type="GO" id="GO:0005829">
    <property type="term" value="C:cytosol"/>
    <property type="evidence" value="ECO:0007669"/>
    <property type="project" value="UniProtKB-ARBA"/>
</dbReference>
<dbReference type="GO" id="GO:0005085">
    <property type="term" value="F:guanyl-nucleotide exchange factor activity"/>
    <property type="evidence" value="ECO:0007669"/>
    <property type="project" value="UniProtKB-KW"/>
</dbReference>
<dbReference type="GO" id="GO:0035556">
    <property type="term" value="P:intracellular signal transduction"/>
    <property type="evidence" value="ECO:0007669"/>
    <property type="project" value="InterPro"/>
</dbReference>
<dbReference type="GO" id="GO:0035025">
    <property type="term" value="P:positive regulation of Rho protein signal transduction"/>
    <property type="evidence" value="ECO:0007669"/>
    <property type="project" value="TreeGrafter"/>
</dbReference>
<dbReference type="CDD" id="cd10572">
    <property type="entry name" value="PH_RhoGEF3_XPLN"/>
    <property type="match status" value="1"/>
</dbReference>
<dbReference type="CDD" id="cd00160">
    <property type="entry name" value="RhoGEF"/>
    <property type="match status" value="1"/>
</dbReference>
<dbReference type="FunFam" id="2.30.29.30:FF:000151">
    <property type="entry name" value="Rho guanine nucleotide exchange factor 3"/>
    <property type="match status" value="1"/>
</dbReference>
<dbReference type="FunFam" id="1.20.900.10:FF:000010">
    <property type="entry name" value="Rho guanine nucleotide exchange factor 3 isoform 1"/>
    <property type="match status" value="1"/>
</dbReference>
<dbReference type="Gene3D" id="1.20.900.10">
    <property type="entry name" value="Dbl homology (DH) domain"/>
    <property type="match status" value="1"/>
</dbReference>
<dbReference type="Gene3D" id="2.30.29.30">
    <property type="entry name" value="Pleckstrin-homology domain (PH domain)/Phosphotyrosine-binding domain (PTB)"/>
    <property type="match status" value="1"/>
</dbReference>
<dbReference type="InterPro" id="IPR035899">
    <property type="entry name" value="DBL_dom_sf"/>
</dbReference>
<dbReference type="InterPro" id="IPR000219">
    <property type="entry name" value="DH_dom"/>
</dbReference>
<dbReference type="InterPro" id="IPR051480">
    <property type="entry name" value="Endocytic_GEF_Adapter"/>
</dbReference>
<dbReference type="InterPro" id="IPR001331">
    <property type="entry name" value="GDS_CDC24_CS"/>
</dbReference>
<dbReference type="InterPro" id="IPR011993">
    <property type="entry name" value="PH-like_dom_sf"/>
</dbReference>
<dbReference type="InterPro" id="IPR001849">
    <property type="entry name" value="PH_domain"/>
</dbReference>
<dbReference type="InterPro" id="IPR044129">
    <property type="entry name" value="PH_RhoGEF3_XPLN"/>
</dbReference>
<dbReference type="InterPro" id="IPR055251">
    <property type="entry name" value="SOS1_NGEF_PH"/>
</dbReference>
<dbReference type="PANTHER" id="PTHR46006:SF2">
    <property type="entry name" value="RHO GUANINE NUCLEOTIDE EXCHANGE FACTOR 3"/>
    <property type="match status" value="1"/>
</dbReference>
<dbReference type="PANTHER" id="PTHR46006">
    <property type="entry name" value="RHO GUANINE NUCLEOTIDE EXCHANGE FACTOR AT 64C, ISOFORM A"/>
    <property type="match status" value="1"/>
</dbReference>
<dbReference type="Pfam" id="PF00621">
    <property type="entry name" value="RhoGEF"/>
    <property type="match status" value="1"/>
</dbReference>
<dbReference type="Pfam" id="PF22697">
    <property type="entry name" value="SOS1_NGEF_PH"/>
    <property type="match status" value="1"/>
</dbReference>
<dbReference type="SMART" id="SM00233">
    <property type="entry name" value="PH"/>
    <property type="match status" value="1"/>
</dbReference>
<dbReference type="SMART" id="SM00325">
    <property type="entry name" value="RhoGEF"/>
    <property type="match status" value="1"/>
</dbReference>
<dbReference type="SUPFAM" id="SSF48065">
    <property type="entry name" value="DBL homology domain (DH-domain)"/>
    <property type="match status" value="1"/>
</dbReference>
<dbReference type="SUPFAM" id="SSF50729">
    <property type="entry name" value="PH domain-like"/>
    <property type="match status" value="1"/>
</dbReference>
<dbReference type="PROSITE" id="PS00741">
    <property type="entry name" value="DH_1"/>
    <property type="match status" value="1"/>
</dbReference>
<dbReference type="PROSITE" id="PS50010">
    <property type="entry name" value="DH_2"/>
    <property type="match status" value="1"/>
</dbReference>
<dbReference type="PROSITE" id="PS50003">
    <property type="entry name" value="PH_DOMAIN"/>
    <property type="match status" value="1"/>
</dbReference>
<proteinExistence type="evidence at transcript level"/>
<keyword id="KW-0963">Cytoplasm</keyword>
<keyword id="KW-0344">Guanine-nucleotide releasing factor</keyword>
<keyword id="KW-0597">Phosphoprotein</keyword>
<keyword id="KW-1185">Reference proteome</keyword>
<organism>
    <name type="scientific">Pongo abelii</name>
    <name type="common">Sumatran orangutan</name>
    <name type="synonym">Pongo pygmaeus abelii</name>
    <dbReference type="NCBI Taxonomy" id="9601"/>
    <lineage>
        <taxon>Eukaryota</taxon>
        <taxon>Metazoa</taxon>
        <taxon>Chordata</taxon>
        <taxon>Craniata</taxon>
        <taxon>Vertebrata</taxon>
        <taxon>Euteleostomi</taxon>
        <taxon>Mammalia</taxon>
        <taxon>Eutheria</taxon>
        <taxon>Euarchontoglires</taxon>
        <taxon>Primates</taxon>
        <taxon>Haplorrhini</taxon>
        <taxon>Catarrhini</taxon>
        <taxon>Hominidae</taxon>
        <taxon>Pongo</taxon>
    </lineage>
</organism>
<reference key="1">
    <citation type="submission" date="2004-11" db="EMBL/GenBank/DDBJ databases">
        <authorList>
            <consortium name="The German cDNA consortium"/>
        </authorList>
    </citation>
    <scope>NUCLEOTIDE SEQUENCE [LARGE SCALE MRNA]</scope>
    <source>
        <tissue>Brain cortex</tissue>
    </source>
</reference>
<evidence type="ECO:0000250" key="1"/>
<evidence type="ECO:0000250" key="2">
    <source>
        <dbReference type="UniProtKB" id="Q7Z628"/>
    </source>
</evidence>
<evidence type="ECO:0000250" key="3">
    <source>
        <dbReference type="UniProtKB" id="Q9NR81"/>
    </source>
</evidence>
<evidence type="ECO:0000255" key="4">
    <source>
        <dbReference type="PROSITE-ProRule" id="PRU00062"/>
    </source>
</evidence>
<evidence type="ECO:0000255" key="5">
    <source>
        <dbReference type="PROSITE-ProRule" id="PRU00145"/>
    </source>
</evidence>
<evidence type="ECO:0000256" key="6">
    <source>
        <dbReference type="SAM" id="MobiDB-lite"/>
    </source>
</evidence>
<sequence>MVAKDYPFYLTVKRANCSLELPPASGPAKDAEEPSNKRVKPLSRVTSLANLIPPVKATPLKRFSQTLQRSISFRSESRPDILAPRPWSRNAAPSSTKRRDSKLWSETFDVCVNQMLTSKEIKRQEAIFELSQGEEDLIEDLKLAKKAYHDPMLKLSIMTEQELNQIFGTLDSLIPLHEELLSQLRDVRKPDGSTEHVGPILVGWLPCLSSYDSYCSNQVAAKALLDHKKQDHRVQDFLQRCLESPFSRKLDLWNFLDIPRSRLVKYPLLLREILRHTPNDNPDQQHLEEAINIIQGIVAEINTKTGESECRYYKERLLYLEEGQKDSLIDSSRVLCCHGELRNNRGVKLHVFLFQEVLVITRAVTHNEQLCYQLYRQPIPVKDLLLEDLQDGEVRLGGSLRGAFSNNERIKNFFRVSFKNGSQSQTHSLQANDTFNKQQWLNCIRQAKETVLCAAGQAGVLDSEGSFLNPTTGSRELQGETKLEQMDQSDSESDCSMDTSEVSLDCERMEQTDSSCGNSRHGESNV</sequence>
<comment type="function">
    <text evidence="1">Acts as a guanine nucleotide exchange factor (GEF) for RhoA and RhoB GTPases.</text>
</comment>
<comment type="subunit">
    <text evidence="1">Interacts with RHOA and RHOB.</text>
</comment>
<comment type="subcellular location">
    <subcellularLocation>
        <location evidence="1">Cytoplasm</location>
    </subcellularLocation>
</comment>